<accession>Q06FW4</accession>
<reference key="1">
    <citation type="journal article" date="2006" name="Mol. Biol. Evol.">
        <title>The complete chloroplast genome sequence of Pelargonium x hortorum: organization and evolution of the largest and most highly rearranged chloroplast genome of land plants.</title>
        <authorList>
            <person name="Chumley T.W."/>
            <person name="Palmer J.D."/>
            <person name="Mower J.P."/>
            <person name="Fourcade H.M."/>
            <person name="Calie P.J."/>
            <person name="Boore J.L."/>
            <person name="Jansen R.K."/>
        </authorList>
    </citation>
    <scope>NUCLEOTIDE SEQUENCE [LARGE SCALE GENOMIC DNA]</scope>
    <source>
        <strain>cv. Ringo White</strain>
    </source>
</reference>
<organism>
    <name type="scientific">Pelargonium hortorum</name>
    <name type="common">Common geranium</name>
    <name type="synonym">Pelargonium inquinans x Pelargonium zonale</name>
    <dbReference type="NCBI Taxonomy" id="4031"/>
    <lineage>
        <taxon>Eukaryota</taxon>
        <taxon>Viridiplantae</taxon>
        <taxon>Streptophyta</taxon>
        <taxon>Embryophyta</taxon>
        <taxon>Tracheophyta</taxon>
        <taxon>Spermatophyta</taxon>
        <taxon>Magnoliopsida</taxon>
        <taxon>eudicotyledons</taxon>
        <taxon>Gunneridae</taxon>
        <taxon>Pentapetalae</taxon>
        <taxon>rosids</taxon>
        <taxon>malvids</taxon>
        <taxon>Geraniales</taxon>
        <taxon>Geraniaceae</taxon>
        <taxon>Pelargonium</taxon>
    </lineage>
</organism>
<comment type="function">
    <text evidence="1">PsaA and PsaB bind P700, the primary electron donor of photosystem I (PSI), as well as the electron acceptors A0, A1 and FX. PSI is a plastocyanin-ferredoxin oxidoreductase, converting photonic excitation into a charge separation, which transfers an electron from the donor P700 chlorophyll pair to the spectroscopically characterized acceptors A0, A1, FX, FA and FB in turn. Oxidized P700 is reduced on the lumenal side of the thylakoid membrane by plastocyanin.</text>
</comment>
<comment type="catalytic activity">
    <reaction evidence="1">
        <text>reduced [plastocyanin] + hnu + oxidized [2Fe-2S]-[ferredoxin] = oxidized [plastocyanin] + reduced [2Fe-2S]-[ferredoxin]</text>
        <dbReference type="Rhea" id="RHEA:30407"/>
        <dbReference type="Rhea" id="RHEA-COMP:10000"/>
        <dbReference type="Rhea" id="RHEA-COMP:10001"/>
        <dbReference type="Rhea" id="RHEA-COMP:10039"/>
        <dbReference type="Rhea" id="RHEA-COMP:10040"/>
        <dbReference type="ChEBI" id="CHEBI:29036"/>
        <dbReference type="ChEBI" id="CHEBI:30212"/>
        <dbReference type="ChEBI" id="CHEBI:33737"/>
        <dbReference type="ChEBI" id="CHEBI:33738"/>
        <dbReference type="ChEBI" id="CHEBI:49552"/>
        <dbReference type="EC" id="1.97.1.12"/>
    </reaction>
</comment>
<comment type="cofactor">
    <text evidence="1">P700 is a chlorophyll a/chlorophyll a' dimer, A0 is one or more chlorophyll a, A1 is one or both phylloquinones and FX is a shared 4Fe-4S iron-sulfur center.</text>
</comment>
<comment type="subunit">
    <text evidence="1">The PsaA/B heterodimer binds the P700 chlorophyll special pair and subsequent electron acceptors. PSI consists of a core antenna complex that captures photons, and an electron transfer chain that converts photonic excitation into a charge separation. The eukaryotic PSI reaction center is composed of at least 11 subunits.</text>
</comment>
<comment type="subcellular location">
    <subcellularLocation>
        <location>Plastid</location>
        <location>Chloroplast thylakoid membrane</location>
        <topology>Multi-pass membrane protein</topology>
    </subcellularLocation>
</comment>
<comment type="similarity">
    <text evidence="1">Belongs to the PsaA/PsaB family.</text>
</comment>
<feature type="chain" id="PRO_0000277126" description="Photosystem I P700 chlorophyll a apoprotein A2">
    <location>
        <begin position="1"/>
        <end position="734"/>
    </location>
</feature>
<feature type="transmembrane region" description="Helical; Name=I" evidence="1">
    <location>
        <begin position="46"/>
        <end position="69"/>
    </location>
</feature>
<feature type="transmembrane region" description="Helical; Name=II" evidence="1">
    <location>
        <begin position="135"/>
        <end position="158"/>
    </location>
</feature>
<feature type="transmembrane region" description="Helical; Name=III" evidence="1">
    <location>
        <begin position="175"/>
        <end position="199"/>
    </location>
</feature>
<feature type="transmembrane region" description="Helical; Name=IV" evidence="1">
    <location>
        <begin position="273"/>
        <end position="291"/>
    </location>
</feature>
<feature type="transmembrane region" description="Helical; Name=V" evidence="1">
    <location>
        <begin position="330"/>
        <end position="353"/>
    </location>
</feature>
<feature type="transmembrane region" description="Helical; Name=VI" evidence="1">
    <location>
        <begin position="369"/>
        <end position="395"/>
    </location>
</feature>
<feature type="transmembrane region" description="Helical; Name=VII" evidence="1">
    <location>
        <begin position="417"/>
        <end position="439"/>
    </location>
</feature>
<feature type="transmembrane region" description="Helical; Name=VIII" evidence="1">
    <location>
        <begin position="517"/>
        <end position="535"/>
    </location>
</feature>
<feature type="transmembrane region" description="Helical; Name=IX" evidence="1">
    <location>
        <begin position="575"/>
        <end position="596"/>
    </location>
</feature>
<feature type="transmembrane region" description="Helical; Name=X" evidence="1">
    <location>
        <begin position="643"/>
        <end position="665"/>
    </location>
</feature>
<feature type="transmembrane region" description="Helical; Name=XI" evidence="1">
    <location>
        <begin position="707"/>
        <end position="727"/>
    </location>
</feature>
<feature type="binding site" evidence="1">
    <location>
        <position position="559"/>
    </location>
    <ligand>
        <name>[4Fe-4S] cluster</name>
        <dbReference type="ChEBI" id="CHEBI:49883"/>
        <note>ligand shared between dimeric partners</note>
    </ligand>
</feature>
<feature type="binding site" evidence="1">
    <location>
        <position position="568"/>
    </location>
    <ligand>
        <name>[4Fe-4S] cluster</name>
        <dbReference type="ChEBI" id="CHEBI:49883"/>
        <note>ligand shared between dimeric partners</note>
    </ligand>
</feature>
<feature type="binding site" description="axial binding residue" evidence="1">
    <location>
        <position position="654"/>
    </location>
    <ligand>
        <name>chlorophyll a</name>
        <dbReference type="ChEBI" id="CHEBI:58416"/>
        <label>B1</label>
    </ligand>
    <ligandPart>
        <name>Mg</name>
        <dbReference type="ChEBI" id="CHEBI:25107"/>
    </ligandPart>
</feature>
<feature type="binding site" description="axial binding residue" evidence="1">
    <location>
        <position position="662"/>
    </location>
    <ligand>
        <name>chlorophyll a</name>
        <dbReference type="ChEBI" id="CHEBI:58416"/>
        <label>B3</label>
    </ligand>
    <ligandPart>
        <name>Mg</name>
        <dbReference type="ChEBI" id="CHEBI:25107"/>
    </ligandPart>
</feature>
<feature type="binding site" evidence="1">
    <location>
        <position position="670"/>
    </location>
    <ligand>
        <name>chlorophyll a</name>
        <dbReference type="ChEBI" id="CHEBI:58416"/>
        <label>B3</label>
    </ligand>
</feature>
<feature type="binding site" evidence="1">
    <location>
        <position position="671"/>
    </location>
    <ligand>
        <name>phylloquinone</name>
        <dbReference type="ChEBI" id="CHEBI:18067"/>
        <label>B</label>
    </ligand>
</feature>
<name>PSAB_PELHO</name>
<proteinExistence type="inferred from homology"/>
<dbReference type="EC" id="1.97.1.12" evidence="1"/>
<dbReference type="EMBL" id="DQ897681">
    <property type="protein sequence ID" value="ABI17258.1"/>
    <property type="molecule type" value="Genomic_DNA"/>
</dbReference>
<dbReference type="RefSeq" id="YP_784067.1">
    <property type="nucleotide sequence ID" value="NC_008454.1"/>
</dbReference>
<dbReference type="SMR" id="Q06FW4"/>
<dbReference type="GeneID" id="4362806"/>
<dbReference type="GO" id="GO:0009535">
    <property type="term" value="C:chloroplast thylakoid membrane"/>
    <property type="evidence" value="ECO:0007669"/>
    <property type="project" value="UniProtKB-SubCell"/>
</dbReference>
<dbReference type="GO" id="GO:0009522">
    <property type="term" value="C:photosystem I"/>
    <property type="evidence" value="ECO:0007669"/>
    <property type="project" value="UniProtKB-KW"/>
</dbReference>
<dbReference type="GO" id="GO:0051539">
    <property type="term" value="F:4 iron, 4 sulfur cluster binding"/>
    <property type="evidence" value="ECO:0007669"/>
    <property type="project" value="UniProtKB-KW"/>
</dbReference>
<dbReference type="GO" id="GO:0016168">
    <property type="term" value="F:chlorophyll binding"/>
    <property type="evidence" value="ECO:0007669"/>
    <property type="project" value="UniProtKB-KW"/>
</dbReference>
<dbReference type="GO" id="GO:0009055">
    <property type="term" value="F:electron transfer activity"/>
    <property type="evidence" value="ECO:0007669"/>
    <property type="project" value="UniProtKB-UniRule"/>
</dbReference>
<dbReference type="GO" id="GO:0000287">
    <property type="term" value="F:magnesium ion binding"/>
    <property type="evidence" value="ECO:0007669"/>
    <property type="project" value="UniProtKB-UniRule"/>
</dbReference>
<dbReference type="GO" id="GO:0016491">
    <property type="term" value="F:oxidoreductase activity"/>
    <property type="evidence" value="ECO:0007669"/>
    <property type="project" value="UniProtKB-KW"/>
</dbReference>
<dbReference type="GO" id="GO:0015979">
    <property type="term" value="P:photosynthesis"/>
    <property type="evidence" value="ECO:0007669"/>
    <property type="project" value="UniProtKB-UniRule"/>
</dbReference>
<dbReference type="FunFam" id="1.20.1130.10:FF:000001">
    <property type="entry name" value="Photosystem I P700 chlorophyll a apoprotein A2"/>
    <property type="match status" value="1"/>
</dbReference>
<dbReference type="Gene3D" id="1.20.1130.10">
    <property type="entry name" value="Photosystem I PsaA/PsaB"/>
    <property type="match status" value="1"/>
</dbReference>
<dbReference type="HAMAP" id="MF_00482">
    <property type="entry name" value="PSI_PsaB"/>
    <property type="match status" value="1"/>
</dbReference>
<dbReference type="InterPro" id="IPR001280">
    <property type="entry name" value="PSI_PsaA/B"/>
</dbReference>
<dbReference type="InterPro" id="IPR020586">
    <property type="entry name" value="PSI_PsaA/B_CS"/>
</dbReference>
<dbReference type="InterPro" id="IPR036408">
    <property type="entry name" value="PSI_PsaA/B_sf"/>
</dbReference>
<dbReference type="InterPro" id="IPR006244">
    <property type="entry name" value="PSI_PsaB"/>
</dbReference>
<dbReference type="NCBIfam" id="TIGR01336">
    <property type="entry name" value="psaB"/>
    <property type="match status" value="1"/>
</dbReference>
<dbReference type="PANTHER" id="PTHR30128">
    <property type="entry name" value="OUTER MEMBRANE PROTEIN, OMPA-RELATED"/>
    <property type="match status" value="1"/>
</dbReference>
<dbReference type="PANTHER" id="PTHR30128:SF19">
    <property type="entry name" value="PHOTOSYSTEM I P700 CHLOROPHYLL A APOPROTEIN A1-RELATED"/>
    <property type="match status" value="1"/>
</dbReference>
<dbReference type="Pfam" id="PF00223">
    <property type="entry name" value="PsaA_PsaB"/>
    <property type="match status" value="1"/>
</dbReference>
<dbReference type="PIRSF" id="PIRSF002905">
    <property type="entry name" value="PSI_A"/>
    <property type="match status" value="1"/>
</dbReference>
<dbReference type="PRINTS" id="PR00257">
    <property type="entry name" value="PHOTSYSPSAAB"/>
</dbReference>
<dbReference type="SUPFAM" id="SSF81558">
    <property type="entry name" value="Photosystem I subunits PsaA/PsaB"/>
    <property type="match status" value="1"/>
</dbReference>
<dbReference type="PROSITE" id="PS00419">
    <property type="entry name" value="PHOTOSYSTEM_I_PSAAB"/>
    <property type="match status" value="1"/>
</dbReference>
<sequence>MALRFPRFSQGLAQDPTTRRIWFGIATAHDFESHDDITEERLYQNIFASHFGQLAIIFLWTSGNLFHVAWQGNFEAWVQDPLHVRPIAHAIWDPHFGQPAVEAFTRGGALGPVNIAYSGVYQWWYTIGLRTNEDLYTGALFLLFLSAISLIAGWLHLQPKWKPSVSWFKNAESRLNHHLSGLFGVSSLAWTGHLVHVAIPASRGEYVRWNNFLDVLPHPRGLGPLFTGQWNLYAQNPDSNSHFFGTSQGSGTAILTLLGGFHPQTQSLWLTDIAHHHLAIAFLFLVAGHMYRTNFGIGHSIKDLLEAHIPPGGRLGRGHKGLYDTINNSIHFQLGLALASLGVITSLVAQHMYSLPAYAFIAQDFTTQAALYTHHQYIAGFIMTGAFAHGAIFFIRDYNPEQNEDNVLARMLDHKEAIISHLSWVSLFLGFHTLGLYVHNDVMLAFGTPEKQILIEPIFAQWIQSAHGKTSYGFDVLLSSTNSPAFIAGRSIWLPGWLNAINENSNSLFLKIGPGDFLVHHAIALGLHTTTLILVKGALDARGSKLMPDKKDFGYSFPCDGPGRGGTCDISAWDAFYLAVFWMLNTIGWVTFYWHWKHITLWQGNVSQFNESSTYLMGWLRDYLWLNSSQLINGYNPFGMNSLSVWAWMFLFGHLVWATGFMFLISWRGYWQELIETLAWAHERTPLANLIRWRDKPVALSIVQARLVGLAHFSVGYIFTYAAFLIASTSGKFG</sequence>
<gene>
    <name evidence="1" type="primary">psaB</name>
</gene>
<geneLocation type="chloroplast"/>
<protein>
    <recommendedName>
        <fullName evidence="1">Photosystem I P700 chlorophyll a apoprotein A2</fullName>
        <ecNumber evidence="1">1.97.1.12</ecNumber>
    </recommendedName>
    <alternativeName>
        <fullName evidence="1">PSI-B</fullName>
    </alternativeName>
    <alternativeName>
        <fullName evidence="1">PsaB</fullName>
    </alternativeName>
</protein>
<keyword id="KW-0004">4Fe-4S</keyword>
<keyword id="KW-0148">Chlorophyll</keyword>
<keyword id="KW-0150">Chloroplast</keyword>
<keyword id="KW-0157">Chromophore</keyword>
<keyword id="KW-0249">Electron transport</keyword>
<keyword id="KW-0408">Iron</keyword>
<keyword id="KW-0411">Iron-sulfur</keyword>
<keyword id="KW-0460">Magnesium</keyword>
<keyword id="KW-0472">Membrane</keyword>
<keyword id="KW-0479">Metal-binding</keyword>
<keyword id="KW-0560">Oxidoreductase</keyword>
<keyword id="KW-0602">Photosynthesis</keyword>
<keyword id="KW-0603">Photosystem I</keyword>
<keyword id="KW-0934">Plastid</keyword>
<keyword id="KW-0793">Thylakoid</keyword>
<keyword id="KW-0812">Transmembrane</keyword>
<keyword id="KW-1133">Transmembrane helix</keyword>
<keyword id="KW-0813">Transport</keyword>
<evidence type="ECO:0000255" key="1">
    <source>
        <dbReference type="HAMAP-Rule" id="MF_00482"/>
    </source>
</evidence>